<evidence type="ECO:0000255" key="1">
    <source>
        <dbReference type="HAMAP-Rule" id="MF_00289"/>
    </source>
</evidence>
<evidence type="ECO:0000269" key="2">
    <source>
    </source>
</evidence>
<evidence type="ECO:0007829" key="3">
    <source>
        <dbReference type="PDB" id="1J2P"/>
    </source>
</evidence>
<evidence type="ECO:0007829" key="4">
    <source>
        <dbReference type="PDB" id="1J2Q"/>
    </source>
</evidence>
<protein>
    <recommendedName>
        <fullName evidence="1">Proteasome subunit alpha</fullName>
    </recommendedName>
    <alternativeName>
        <fullName evidence="1">20S proteasome alpha subunit</fullName>
    </alternativeName>
    <alternativeName>
        <fullName evidence="1">Proteasome core protein PsmA</fullName>
    </alternativeName>
</protein>
<comment type="function">
    <text evidence="1">Component of the proteasome core, a large protease complex with broad specificity involved in protein degradation.</text>
</comment>
<comment type="activity regulation">
    <text evidence="1">The formation of the proteasomal ATPase PAN-20S proteasome complex, via the docking of the C-termini of PAN into the intersubunit pockets in the alpha-rings, triggers opening of the gate for substrate entry. Interconversion between the open-gate and close-gate conformations leads to a dynamic regulation of the 20S proteasome proteolysis activity.</text>
</comment>
<comment type="subunit">
    <text evidence="2">The 20S proteasome core is composed of 14 alpha and 14 beta subunits that assemble into four stacked heptameric rings, resulting in a barrel-shaped structure. The two inner rings, each composed of seven catalytic beta subunits, are sandwiched by two outer rings, each composed of seven alpha subunits. The catalytic chamber with the active sites is on the inside of the barrel. Has probably a gated structure, the ends of the cylinder being occluded by the N-termini of the alpha-subunits. Is likely capped at one or both ends by the proteasome regulatory ATPase, PAN.</text>
</comment>
<comment type="interaction">
    <interactant intactId="EBI-1035754">
        <id>O29760</id>
    </interactant>
    <interactant intactId="EBI-1035761">
        <id>Q9P996</id>
        <label>psmB</label>
    </interactant>
    <organismsDiffer>false</organismsDiffer>
    <experiments>2</experiments>
</comment>
<comment type="subcellular location">
    <subcellularLocation>
        <location evidence="1">Cytoplasm</location>
    </subcellularLocation>
</comment>
<comment type="similarity">
    <text evidence="1">Belongs to the peptidase T1A family.</text>
</comment>
<proteinExistence type="evidence at protein level"/>
<sequence length="246" mass="27599">MHLPQMGYDRAITVFSPDGRLFQVEYAREAVKRGATAIGIKCKEGVILIADKRVGSKLLEADTIEKIYKIDEHICAATSGLVADARVLIDRARIEAQINRLTYDEPITVKELAKKICDFKQQYTQYGGVRPFGVSLLIAGVDEVPKLYETDPSGALLEYKATAIGMGRNAVTEFFEKEYRDDLSFDDAMVLGLVAMGLSIESELVPENIEVGYVKVDDRTFKEVSPEELKPYVERANERIRELLKK</sequence>
<reference key="1">
    <citation type="journal article" date="1997" name="Nature">
        <title>The complete genome sequence of the hyperthermophilic, sulphate-reducing archaeon Archaeoglobus fulgidus.</title>
        <authorList>
            <person name="Klenk H.-P."/>
            <person name="Clayton R.A."/>
            <person name="Tomb J.-F."/>
            <person name="White O."/>
            <person name="Nelson K.E."/>
            <person name="Ketchum K.A."/>
            <person name="Dodson R.J."/>
            <person name="Gwinn M.L."/>
            <person name="Hickey E.K."/>
            <person name="Peterson J.D."/>
            <person name="Richardson D.L."/>
            <person name="Kerlavage A.R."/>
            <person name="Graham D.E."/>
            <person name="Kyrpides N.C."/>
            <person name="Fleischmann R.D."/>
            <person name="Quackenbush J."/>
            <person name="Lee N.H."/>
            <person name="Sutton G.G."/>
            <person name="Gill S.R."/>
            <person name="Kirkness E.F."/>
            <person name="Dougherty B.A."/>
            <person name="McKenney K."/>
            <person name="Adams M.D."/>
            <person name="Loftus B.J."/>
            <person name="Peterson S.N."/>
            <person name="Reich C.I."/>
            <person name="McNeil L.K."/>
            <person name="Badger J.H."/>
            <person name="Glodek A."/>
            <person name="Zhou L."/>
            <person name="Overbeek R."/>
            <person name="Gocayne J.D."/>
            <person name="Weidman J.F."/>
            <person name="McDonald L.A."/>
            <person name="Utterback T.R."/>
            <person name="Cotton M.D."/>
            <person name="Spriggs T."/>
            <person name="Artiach P."/>
            <person name="Kaine B.P."/>
            <person name="Sykes S.M."/>
            <person name="Sadow P.W."/>
            <person name="D'Andrea K.P."/>
            <person name="Bowman C."/>
            <person name="Fujii C."/>
            <person name="Garland S.A."/>
            <person name="Mason T.M."/>
            <person name="Olsen G.J."/>
            <person name="Fraser C.M."/>
            <person name="Smith H.O."/>
            <person name="Woese C.R."/>
            <person name="Venter J.C."/>
        </authorList>
    </citation>
    <scope>NUCLEOTIDE SEQUENCE [LARGE SCALE GENOMIC DNA]</scope>
    <source>
        <strain>ATCC 49558 / DSM 4304 / JCM 9628 / NBRC 100126 / VC-16</strain>
    </source>
</reference>
<reference key="2">
    <citation type="journal article" date="2003" name="J. Mol. Biol.">
        <title>Investigations on the maturation and regulation of archaebacterial proteasomes.</title>
        <authorList>
            <person name="Groll M."/>
            <person name="Brandstetter H."/>
            <person name="Bartunik H."/>
            <person name="Bourenkow G."/>
            <person name="Huber R."/>
        </authorList>
    </citation>
    <scope>X-RAY CRYSTALLOGRAPHY (2.6 ANGSTROMS) OF NATIVE PROTEIN AND IN COMPLEX WITH BETA SUBUNIT AND CALPAIN-INHIBITOR I</scope>
    <scope>SUBUNIT</scope>
</reference>
<gene>
    <name evidence="1" type="primary">psmA</name>
    <name type="ordered locus">AF_0490</name>
</gene>
<feature type="chain" id="PRO_0000124167" description="Proteasome subunit alpha">
    <location>
        <begin position="1"/>
        <end position="246"/>
    </location>
</feature>
<feature type="strand" evidence="3">
    <location>
        <begin position="8"/>
        <end position="10"/>
    </location>
</feature>
<feature type="helix" evidence="3">
    <location>
        <begin position="22"/>
        <end position="32"/>
    </location>
</feature>
<feature type="strand" evidence="3">
    <location>
        <begin position="37"/>
        <end position="42"/>
    </location>
</feature>
<feature type="strand" evidence="3">
    <location>
        <begin position="45"/>
        <end position="51"/>
    </location>
</feature>
<feature type="helix" evidence="3">
    <location>
        <begin position="61"/>
        <end position="63"/>
    </location>
</feature>
<feature type="strand" evidence="3">
    <location>
        <begin position="66"/>
        <end position="69"/>
    </location>
</feature>
<feature type="strand" evidence="3">
    <location>
        <begin position="71"/>
        <end position="80"/>
    </location>
</feature>
<feature type="helix" evidence="3">
    <location>
        <begin position="82"/>
        <end position="102"/>
    </location>
</feature>
<feature type="strand" evidence="3">
    <location>
        <begin position="103"/>
        <end position="105"/>
    </location>
</feature>
<feature type="helix" evidence="3">
    <location>
        <begin position="109"/>
        <end position="122"/>
    </location>
</feature>
<feature type="turn" evidence="4">
    <location>
        <begin position="123"/>
        <end position="125"/>
    </location>
</feature>
<feature type="strand" evidence="4">
    <location>
        <begin position="127"/>
        <end position="129"/>
    </location>
</feature>
<feature type="strand" evidence="3">
    <location>
        <begin position="134"/>
        <end position="150"/>
    </location>
</feature>
<feature type="strand" evidence="3">
    <location>
        <begin position="156"/>
        <end position="165"/>
    </location>
</feature>
<feature type="helix" evidence="3">
    <location>
        <begin position="168"/>
        <end position="178"/>
    </location>
</feature>
<feature type="helix" evidence="3">
    <location>
        <begin position="185"/>
        <end position="200"/>
    </location>
</feature>
<feature type="helix" evidence="3">
    <location>
        <begin position="206"/>
        <end position="208"/>
    </location>
</feature>
<feature type="strand" evidence="3">
    <location>
        <begin position="209"/>
        <end position="215"/>
    </location>
</feature>
<feature type="turn" evidence="3">
    <location>
        <begin position="216"/>
        <end position="218"/>
    </location>
</feature>
<feature type="helix" evidence="3">
    <location>
        <begin position="226"/>
        <end position="243"/>
    </location>
</feature>
<organism>
    <name type="scientific">Archaeoglobus fulgidus (strain ATCC 49558 / DSM 4304 / JCM 9628 / NBRC 100126 / VC-16)</name>
    <dbReference type="NCBI Taxonomy" id="224325"/>
    <lineage>
        <taxon>Archaea</taxon>
        <taxon>Methanobacteriati</taxon>
        <taxon>Methanobacteriota</taxon>
        <taxon>Archaeoglobi</taxon>
        <taxon>Archaeoglobales</taxon>
        <taxon>Archaeoglobaceae</taxon>
        <taxon>Archaeoglobus</taxon>
    </lineage>
</organism>
<keyword id="KW-0002">3D-structure</keyword>
<keyword id="KW-0963">Cytoplasm</keyword>
<keyword id="KW-0647">Proteasome</keyword>
<keyword id="KW-1185">Reference proteome</keyword>
<name>PSA_ARCFU</name>
<dbReference type="EMBL" id="AE000782">
    <property type="protein sequence ID" value="AAB90747.1"/>
    <property type="molecule type" value="Genomic_DNA"/>
</dbReference>
<dbReference type="PIR" id="B69311">
    <property type="entry name" value="B69311"/>
</dbReference>
<dbReference type="RefSeq" id="WP_010877997.1">
    <property type="nucleotide sequence ID" value="NC_000917.1"/>
</dbReference>
<dbReference type="PDB" id="1J2P">
    <property type="method" value="X-ray"/>
    <property type="resolution" value="2.60 A"/>
    <property type="chains" value="A/B/C/D/E/F/G=1-246"/>
</dbReference>
<dbReference type="PDB" id="1J2Q">
    <property type="method" value="X-ray"/>
    <property type="resolution" value="2.83 A"/>
    <property type="chains" value="A/B/C/D/E/F/G=10-246"/>
</dbReference>
<dbReference type="PDB" id="6HE5">
    <property type="method" value="EM"/>
    <property type="resolution" value="4.12 A"/>
    <property type="chains" value="A/B/C/D/E/F/G=2-246"/>
</dbReference>
<dbReference type="PDB" id="6HE7">
    <property type="method" value="EM"/>
    <property type="resolution" value="3.69 A"/>
    <property type="chains" value="A/B/C/D/E/F/G=12-246"/>
</dbReference>
<dbReference type="PDB" id="6HE8">
    <property type="method" value="EM"/>
    <property type="resolution" value="6.86 A"/>
    <property type="chains" value="A/B/C/D/E/F/G/a/b/c/d/e/f/g=5-246"/>
</dbReference>
<dbReference type="PDB" id="6HE9">
    <property type="method" value="EM"/>
    <property type="resolution" value="6.35 A"/>
    <property type="chains" value="A/B/C/D/E/F/G/a/b/c/d/e/f/g=5-246"/>
</dbReference>
<dbReference type="PDB" id="6HEA">
    <property type="method" value="EM"/>
    <property type="resolution" value="7.04 A"/>
    <property type="chains" value="A/B/C/D/E/F/G/a/b/c/d/e/f/g=5-246"/>
</dbReference>
<dbReference type="PDB" id="6HEC">
    <property type="method" value="EM"/>
    <property type="resolution" value="6.95 A"/>
    <property type="chains" value="A/B/C/D/E/F/G/a/b/c/d/e/f/g=5-246"/>
</dbReference>
<dbReference type="PDB" id="6HED">
    <property type="method" value="EM"/>
    <property type="resolution" value="6.95 A"/>
    <property type="chains" value="A/B/C/D/E/F/G/a/b/c/d/e/f/g=5-246"/>
</dbReference>
<dbReference type="PDBsum" id="1J2P"/>
<dbReference type="PDBsum" id="1J2Q"/>
<dbReference type="PDBsum" id="6HE5"/>
<dbReference type="PDBsum" id="6HE7"/>
<dbReference type="PDBsum" id="6HE8"/>
<dbReference type="PDBsum" id="6HE9"/>
<dbReference type="PDBsum" id="6HEA"/>
<dbReference type="PDBsum" id="6HEC"/>
<dbReference type="PDBsum" id="6HED"/>
<dbReference type="EMDB" id="EMD-0210"/>
<dbReference type="EMDB" id="EMD-0211"/>
<dbReference type="EMDB" id="EMD-0212"/>
<dbReference type="EMDB" id="EMD-0213"/>
<dbReference type="EMDB" id="EMD-0214"/>
<dbReference type="EMDB" id="EMD-0215"/>
<dbReference type="EMDB" id="EMD-0216"/>
<dbReference type="SMR" id="O29760"/>
<dbReference type="IntAct" id="O29760">
    <property type="interactions" value="2"/>
</dbReference>
<dbReference type="STRING" id="224325.AF_0490"/>
<dbReference type="MEROPS" id="T01.970"/>
<dbReference type="PaxDb" id="224325-AF_0490"/>
<dbReference type="EnsemblBacteria" id="AAB90747">
    <property type="protein sequence ID" value="AAB90747"/>
    <property type="gene ID" value="AF_0490"/>
</dbReference>
<dbReference type="GeneID" id="24794030"/>
<dbReference type="KEGG" id="afu:AF_0490"/>
<dbReference type="eggNOG" id="arCOG00971">
    <property type="taxonomic scope" value="Archaea"/>
</dbReference>
<dbReference type="HOGENOM" id="CLU_035750_4_1_2"/>
<dbReference type="OrthoDB" id="9421at2157"/>
<dbReference type="PhylomeDB" id="O29760"/>
<dbReference type="EvolutionaryTrace" id="O29760"/>
<dbReference type="Proteomes" id="UP000002199">
    <property type="component" value="Chromosome"/>
</dbReference>
<dbReference type="GO" id="GO:0005737">
    <property type="term" value="C:cytoplasm"/>
    <property type="evidence" value="ECO:0007669"/>
    <property type="project" value="UniProtKB-SubCell"/>
</dbReference>
<dbReference type="GO" id="GO:0019773">
    <property type="term" value="C:proteasome core complex, alpha-subunit complex"/>
    <property type="evidence" value="ECO:0000250"/>
    <property type="project" value="UniProtKB"/>
</dbReference>
<dbReference type="GO" id="GO:0004298">
    <property type="term" value="F:threonine-type endopeptidase activity"/>
    <property type="evidence" value="ECO:0007669"/>
    <property type="project" value="InterPro"/>
</dbReference>
<dbReference type="GO" id="GO:0010498">
    <property type="term" value="P:proteasomal protein catabolic process"/>
    <property type="evidence" value="ECO:0007669"/>
    <property type="project" value="UniProtKB-UniRule"/>
</dbReference>
<dbReference type="GO" id="GO:0006511">
    <property type="term" value="P:ubiquitin-dependent protein catabolic process"/>
    <property type="evidence" value="ECO:0007669"/>
    <property type="project" value="InterPro"/>
</dbReference>
<dbReference type="CDD" id="cd03756">
    <property type="entry name" value="proteasome_alpha_archeal"/>
    <property type="match status" value="1"/>
</dbReference>
<dbReference type="FunFam" id="3.60.20.10:FF:000004">
    <property type="entry name" value="Proteasome subunit alpha type-4"/>
    <property type="match status" value="1"/>
</dbReference>
<dbReference type="Gene3D" id="3.60.20.10">
    <property type="entry name" value="Glutamine Phosphoribosylpyrophosphate, subunit 1, domain 1"/>
    <property type="match status" value="1"/>
</dbReference>
<dbReference type="HAMAP" id="MF_00289_A">
    <property type="entry name" value="Proteasome_A_A"/>
    <property type="match status" value="1"/>
</dbReference>
<dbReference type="InterPro" id="IPR029055">
    <property type="entry name" value="Ntn_hydrolases_N"/>
</dbReference>
<dbReference type="InterPro" id="IPR050115">
    <property type="entry name" value="Proteasome_alpha"/>
</dbReference>
<dbReference type="InterPro" id="IPR023332">
    <property type="entry name" value="Proteasome_alpha-type"/>
</dbReference>
<dbReference type="InterPro" id="IPR019982">
    <property type="entry name" value="Proteasome_asu_arc"/>
</dbReference>
<dbReference type="InterPro" id="IPR000426">
    <property type="entry name" value="Proteasome_asu_N"/>
</dbReference>
<dbReference type="InterPro" id="IPR001353">
    <property type="entry name" value="Proteasome_sua/b"/>
</dbReference>
<dbReference type="NCBIfam" id="TIGR03633">
    <property type="entry name" value="arc_protsome_A"/>
    <property type="match status" value="1"/>
</dbReference>
<dbReference type="NCBIfam" id="NF003075">
    <property type="entry name" value="PRK03996.1"/>
    <property type="match status" value="1"/>
</dbReference>
<dbReference type="PANTHER" id="PTHR11599">
    <property type="entry name" value="PROTEASOME SUBUNIT ALPHA/BETA"/>
    <property type="match status" value="1"/>
</dbReference>
<dbReference type="Pfam" id="PF00227">
    <property type="entry name" value="Proteasome"/>
    <property type="match status" value="1"/>
</dbReference>
<dbReference type="Pfam" id="PF10584">
    <property type="entry name" value="Proteasome_A_N"/>
    <property type="match status" value="1"/>
</dbReference>
<dbReference type="SMART" id="SM00948">
    <property type="entry name" value="Proteasome_A_N"/>
    <property type="match status" value="1"/>
</dbReference>
<dbReference type="SUPFAM" id="SSF56235">
    <property type="entry name" value="N-terminal nucleophile aminohydrolases (Ntn hydrolases)"/>
    <property type="match status" value="1"/>
</dbReference>
<dbReference type="PROSITE" id="PS00388">
    <property type="entry name" value="PROTEASOME_ALPHA_1"/>
    <property type="match status" value="1"/>
</dbReference>
<dbReference type="PROSITE" id="PS51475">
    <property type="entry name" value="PROTEASOME_ALPHA_2"/>
    <property type="match status" value="1"/>
</dbReference>
<accession>O29760</accession>